<dbReference type="EMBL" id="DP000236">
    <property type="protein sequence ID" value="AAR16268.1"/>
    <property type="molecule type" value="Genomic_DNA"/>
</dbReference>
<dbReference type="RefSeq" id="NP_001013013.1">
    <property type="nucleotide sequence ID" value="NM_001012995.2"/>
</dbReference>
<dbReference type="SMR" id="A0M8V0"/>
<dbReference type="FunCoup" id="A0M8V0">
    <property type="interactions" value="2558"/>
</dbReference>
<dbReference type="STRING" id="9615.ENSCAFP00000005070"/>
<dbReference type="SwissPalm" id="A0M8V0"/>
<dbReference type="PaxDb" id="9612-ENSCAFP00000005070"/>
<dbReference type="GeneID" id="503863"/>
<dbReference type="KEGG" id="cfa:503863"/>
<dbReference type="CTD" id="830"/>
<dbReference type="eggNOG" id="KOG0836">
    <property type="taxonomic scope" value="Eukaryota"/>
</dbReference>
<dbReference type="HOGENOM" id="CLU_045161_0_0_1"/>
<dbReference type="InParanoid" id="A0M8V0"/>
<dbReference type="OMA" id="VACIEDH"/>
<dbReference type="OrthoDB" id="9825950at2759"/>
<dbReference type="TreeFam" id="TF314822"/>
<dbReference type="Proteomes" id="UP000002254">
    <property type="component" value="Unplaced"/>
</dbReference>
<dbReference type="Proteomes" id="UP000694429">
    <property type="component" value="Unplaced"/>
</dbReference>
<dbReference type="Proteomes" id="UP000694542">
    <property type="component" value="Unplaced"/>
</dbReference>
<dbReference type="Proteomes" id="UP000805418">
    <property type="component" value="Unplaced"/>
</dbReference>
<dbReference type="GO" id="GO:0030863">
    <property type="term" value="C:cortical cytoskeleton"/>
    <property type="evidence" value="ECO:0000318"/>
    <property type="project" value="GO_Central"/>
</dbReference>
<dbReference type="GO" id="GO:0008290">
    <property type="term" value="C:F-actin capping protein complex"/>
    <property type="evidence" value="ECO:0000318"/>
    <property type="project" value="GO_Central"/>
</dbReference>
<dbReference type="GO" id="GO:0051015">
    <property type="term" value="F:actin filament binding"/>
    <property type="evidence" value="ECO:0000318"/>
    <property type="project" value="GO_Central"/>
</dbReference>
<dbReference type="GO" id="GO:0030036">
    <property type="term" value="P:actin cytoskeleton organization"/>
    <property type="evidence" value="ECO:0000318"/>
    <property type="project" value="GO_Central"/>
</dbReference>
<dbReference type="GO" id="GO:0051016">
    <property type="term" value="P:barbed-end actin filament capping"/>
    <property type="evidence" value="ECO:0000318"/>
    <property type="project" value="GO_Central"/>
</dbReference>
<dbReference type="FunFam" id="3.30.1140.60:FF:000001">
    <property type="entry name" value="F-actin-capping protein subunit alpha"/>
    <property type="match status" value="1"/>
</dbReference>
<dbReference type="FunFam" id="3.90.1150.210:FF:000002">
    <property type="entry name" value="F-actin-capping protein subunit alpha"/>
    <property type="match status" value="1"/>
</dbReference>
<dbReference type="Gene3D" id="3.30.1140.60">
    <property type="entry name" value="F-actin capping protein, alpha subunit"/>
    <property type="match status" value="1"/>
</dbReference>
<dbReference type="Gene3D" id="3.90.1150.210">
    <property type="entry name" value="F-actin capping protein, beta subunit"/>
    <property type="match status" value="1"/>
</dbReference>
<dbReference type="InterPro" id="IPR002189">
    <property type="entry name" value="CapZ_alpha"/>
</dbReference>
<dbReference type="InterPro" id="IPR037282">
    <property type="entry name" value="CapZ_alpha/beta"/>
</dbReference>
<dbReference type="InterPro" id="IPR042276">
    <property type="entry name" value="CapZ_alpha/beta_2"/>
</dbReference>
<dbReference type="InterPro" id="IPR042489">
    <property type="entry name" value="CapZ_alpha_1"/>
</dbReference>
<dbReference type="InterPro" id="IPR017865">
    <property type="entry name" value="F-actin_cap_asu_CS"/>
</dbReference>
<dbReference type="PANTHER" id="PTHR10653">
    <property type="entry name" value="F-ACTIN-CAPPING PROTEIN SUBUNIT ALPHA"/>
    <property type="match status" value="1"/>
</dbReference>
<dbReference type="PANTHER" id="PTHR10653:SF2">
    <property type="entry name" value="F-ACTIN-CAPPING PROTEIN SUBUNIT ALPHA-2"/>
    <property type="match status" value="1"/>
</dbReference>
<dbReference type="Pfam" id="PF01267">
    <property type="entry name" value="F-actin_cap_A"/>
    <property type="match status" value="1"/>
</dbReference>
<dbReference type="PRINTS" id="PR00191">
    <property type="entry name" value="FACTINCAPA"/>
</dbReference>
<dbReference type="SUPFAM" id="SSF90096">
    <property type="entry name" value="Subunits of heterodimeric actin filament capping protein Capz"/>
    <property type="match status" value="1"/>
</dbReference>
<dbReference type="PROSITE" id="PS00748">
    <property type="entry name" value="F_ACTIN_CAPPING_A_1"/>
    <property type="match status" value="1"/>
</dbReference>
<dbReference type="PROSITE" id="PS00749">
    <property type="entry name" value="F_ACTIN_CAPPING_A_2"/>
    <property type="match status" value="1"/>
</dbReference>
<organism>
    <name type="scientific">Canis lupus familiaris</name>
    <name type="common">Dog</name>
    <name type="synonym">Canis familiaris</name>
    <dbReference type="NCBI Taxonomy" id="9615"/>
    <lineage>
        <taxon>Eukaryota</taxon>
        <taxon>Metazoa</taxon>
        <taxon>Chordata</taxon>
        <taxon>Craniata</taxon>
        <taxon>Vertebrata</taxon>
        <taxon>Euteleostomi</taxon>
        <taxon>Mammalia</taxon>
        <taxon>Eutheria</taxon>
        <taxon>Laurasiatheria</taxon>
        <taxon>Carnivora</taxon>
        <taxon>Caniformia</taxon>
        <taxon>Canidae</taxon>
        <taxon>Canis</taxon>
    </lineage>
</organism>
<comment type="function">
    <text evidence="1">F-actin-capping proteins bind in a Ca(2+)-independent manner to the fast growing ends of actin filaments (barbed end) thereby blocking the exchange of subunits at these ends. Unlike other capping proteins (such as gelsolin and severin), these proteins do not sever actin filaments (By similarity).</text>
</comment>
<comment type="subunit">
    <text evidence="1 2">Component of the F-actin capping complex, composed of a heterodimer of an alpha and a beta subunit. Component of the WASH complex, composed of F-actin-capping protein subunit alpha (CAPZA1, CAPZA2 or CAPZA3), F-actin-capping protein subunit beta (CAPZB), WASHC1, WASHC2, WASHC3, WASHC4 and WASHC5. Interacts with RCSD1/CAPZIP (By similarity). Directly interacts with CRACD; this interaction decreases binding to actin (By similarity).</text>
</comment>
<comment type="similarity">
    <text evidence="3">Belongs to the F-actin-capping protein alpha subunit family.</text>
</comment>
<keyword id="KW-0007">Acetylation</keyword>
<keyword id="KW-0117">Actin capping</keyword>
<keyword id="KW-0009">Actin-binding</keyword>
<keyword id="KW-0597">Phosphoprotein</keyword>
<keyword id="KW-1185">Reference proteome</keyword>
<accession>A0M8V0</accession>
<protein>
    <recommendedName>
        <fullName>F-actin-capping protein subunit alpha-2</fullName>
    </recommendedName>
    <alternativeName>
        <fullName>CapZ alpha-2</fullName>
    </alternativeName>
</protein>
<name>CAZA2_CANLF</name>
<feature type="initiator methionine" description="Removed" evidence="2">
    <location>
        <position position="1"/>
    </location>
</feature>
<feature type="chain" id="PRO_0000279200" description="F-actin-capping protein subunit alpha-2">
    <location>
        <begin position="2"/>
        <end position="286"/>
    </location>
</feature>
<feature type="modified residue" description="N-acetylalanine" evidence="2">
    <location>
        <position position="2"/>
    </location>
</feature>
<feature type="modified residue" description="Phosphoserine" evidence="2">
    <location>
        <position position="9"/>
    </location>
</feature>
<gene>
    <name type="primary">CAPZA2</name>
</gene>
<reference key="1">
    <citation type="journal article" date="2003" name="Nature">
        <title>Comparative analyses of multi-species sequences from targeted genomic regions.</title>
        <authorList>
            <person name="Thomas J.W."/>
            <person name="Touchman J.W."/>
            <person name="Blakesley R.W."/>
            <person name="Bouffard G.G."/>
            <person name="Beckstrom-Sternberg S.M."/>
            <person name="Margulies E.H."/>
            <person name="Blanchette M."/>
            <person name="Siepel A.C."/>
            <person name="Thomas P.J."/>
            <person name="McDowell J.C."/>
            <person name="Maskeri B."/>
            <person name="Hansen N.F."/>
            <person name="Schwartz M.S."/>
            <person name="Weber R.J."/>
            <person name="Kent W.J."/>
            <person name="Karolchik D."/>
            <person name="Bruen T.C."/>
            <person name="Bevan R."/>
            <person name="Cutler D.J."/>
            <person name="Schwartz S."/>
            <person name="Elnitski L."/>
            <person name="Idol J.R."/>
            <person name="Prasad A.B."/>
            <person name="Lee-Lin S.-Q."/>
            <person name="Maduro V.V.B."/>
            <person name="Summers T.J."/>
            <person name="Portnoy M.E."/>
            <person name="Dietrich N.L."/>
            <person name="Akhter N."/>
            <person name="Ayele K."/>
            <person name="Benjamin B."/>
            <person name="Cariaga K."/>
            <person name="Brinkley C.P."/>
            <person name="Brooks S.Y."/>
            <person name="Granite S."/>
            <person name="Guan X."/>
            <person name="Gupta J."/>
            <person name="Haghighi P."/>
            <person name="Ho S.-L."/>
            <person name="Huang M.C."/>
            <person name="Karlins E."/>
            <person name="Laric P.L."/>
            <person name="Legaspi R."/>
            <person name="Lim M.J."/>
            <person name="Maduro Q.L."/>
            <person name="Masiello C.A."/>
            <person name="Mastrian S.D."/>
            <person name="McCloskey J.C."/>
            <person name="Pearson R."/>
            <person name="Stantripop S."/>
            <person name="Tiongson E.E."/>
            <person name="Tran J.T."/>
            <person name="Tsurgeon C."/>
            <person name="Vogt J.L."/>
            <person name="Walker M.A."/>
            <person name="Wetherby K.D."/>
            <person name="Wiggins L.S."/>
            <person name="Young A.C."/>
            <person name="Zhang L.-H."/>
            <person name="Osoegawa K."/>
            <person name="Zhu B."/>
            <person name="Zhao B."/>
            <person name="Shu C.L."/>
            <person name="De Jong P.J."/>
            <person name="Lawrence C.E."/>
            <person name="Smit A.F."/>
            <person name="Chakravarti A."/>
            <person name="Haussler D."/>
            <person name="Green P."/>
            <person name="Miller W."/>
            <person name="Green E.D."/>
        </authorList>
    </citation>
    <scope>NUCLEOTIDE SEQUENCE [LARGE SCALE GENOMIC DNA]</scope>
</reference>
<proteinExistence type="inferred from homology"/>
<evidence type="ECO:0000250" key="1"/>
<evidence type="ECO:0000250" key="2">
    <source>
        <dbReference type="UniProtKB" id="P47755"/>
    </source>
</evidence>
<evidence type="ECO:0000305" key="3"/>
<sequence>MADLEEQLSDEEKVRIAAKFIIHAPPGEFNEVFNDVRLLLNNDNLLREGAAHAFAQYNLDQFTPVKIEGYEDQVLITEHGDLGNGKFLDPKNRICFKFDHLRKEATDPRPYEAENAVESWRTSVETALRAYVKEHYPNGVCTVYGKKIDGQQTIIACIESHQFQAKNFWNGRWRSEWKFTITPSTTQVVGILKIQVHYYEDGNVQLVSHKDIQDSLTVSNEVQTAKEFIKIVEAAENEYQTAISENYQTMSDTTFKALRRQLPVTRTKIDWNKILSYKIGKEMQNA</sequence>